<comment type="function">
    <text evidence="1">Part of the ABC transporter complex LptBFG involved in the translocation of lipopolysaccharide (LPS) from the inner membrane to the outer membrane. Probably responsible for energy coupling to the transport system (By similarity).</text>
</comment>
<comment type="subunit">
    <text evidence="1">Component of the lipopolysaccharide transport and assembly complex. The LptBFG transporter is composed of two ATP-binding proteins (LptB) and two transmembrane proteins (LptF and LptG) (By similarity).</text>
</comment>
<comment type="subcellular location">
    <subcellularLocation>
        <location>Cytoplasm</location>
    </subcellularLocation>
    <subcellularLocation>
        <location evidence="1">Cell inner membrane</location>
        <topology evidence="1">Peripheral membrane protein</topology>
        <orientation evidence="1">Cytoplasmic side</orientation>
    </subcellularLocation>
</comment>
<comment type="similarity">
    <text evidence="3">Belongs to the ABC transporter superfamily. Outer membrane lipopolysaccharide export (TC 1.B.42) family.</text>
</comment>
<name>LPTB_ACIFI</name>
<proteinExistence type="inferred from homology"/>
<evidence type="ECO:0000250" key="1"/>
<evidence type="ECO:0000255" key="2">
    <source>
        <dbReference type="PROSITE-ProRule" id="PRU00434"/>
    </source>
</evidence>
<evidence type="ECO:0000305" key="3"/>
<accession>P24693</accession>
<protein>
    <recommendedName>
        <fullName>Lipopolysaccharide export system ATP-binding protein LptB</fullName>
        <ecNumber>7.5.2.-</ecNumber>
    </recommendedName>
</protein>
<feature type="chain" id="PRO_0000093186" description="Lipopolysaccharide export system ATP-binding protein LptB">
    <location>
        <begin position="1"/>
        <end position="241"/>
    </location>
</feature>
<feature type="domain" description="ABC transporter" evidence="2">
    <location>
        <begin position="5"/>
        <end position="237"/>
    </location>
</feature>
<feature type="binding site" evidence="2">
    <location>
        <begin position="37"/>
        <end position="44"/>
    </location>
    <ligand>
        <name>ATP</name>
        <dbReference type="ChEBI" id="CHEBI:30616"/>
    </ligand>
</feature>
<keyword id="KW-0067">ATP-binding</keyword>
<keyword id="KW-0997">Cell inner membrane</keyword>
<keyword id="KW-1003">Cell membrane</keyword>
<keyword id="KW-0963">Cytoplasm</keyword>
<keyword id="KW-0472">Membrane</keyword>
<keyword id="KW-0547">Nucleotide-binding</keyword>
<keyword id="KW-1278">Translocase</keyword>
<keyword id="KW-0813">Transport</keyword>
<sequence>MSELLQAQSLFKSYRRRVVVRDVSVQVATGEVVGLLGPNGAGKTTTFYMMVGLVRPDRGHIFLQQRDITALPMHERARMGLGYLPQEPSVFRQMSAADNVLAVLETLPLSPVERQERQEQLLSELHLHALRDTKGHSLSGGERRRVEIARALAMSPRFILLDEPFAGIDPISVLEIQRLIRDLRARGIGVLITDHNVRETLGICERAYILHDGKVLTAGSPQEIVDDPMVRQVYLGDQFQI</sequence>
<gene>
    <name type="primary">lptB</name>
</gene>
<dbReference type="EC" id="7.5.2.-"/>
<dbReference type="EMBL" id="M58480">
    <property type="protein sequence ID" value="AAA27378.1"/>
    <property type="molecule type" value="Genomic_DNA"/>
</dbReference>
<dbReference type="PIR" id="A37761">
    <property type="entry name" value="A37761"/>
</dbReference>
<dbReference type="SMR" id="P24693"/>
<dbReference type="GO" id="GO:0043190">
    <property type="term" value="C:ATP-binding cassette (ABC) transporter complex"/>
    <property type="evidence" value="ECO:0007669"/>
    <property type="project" value="InterPro"/>
</dbReference>
<dbReference type="GO" id="GO:0005737">
    <property type="term" value="C:cytoplasm"/>
    <property type="evidence" value="ECO:0007669"/>
    <property type="project" value="UniProtKB-SubCell"/>
</dbReference>
<dbReference type="GO" id="GO:0005524">
    <property type="term" value="F:ATP binding"/>
    <property type="evidence" value="ECO:0007669"/>
    <property type="project" value="UniProtKB-KW"/>
</dbReference>
<dbReference type="GO" id="GO:0016887">
    <property type="term" value="F:ATP hydrolysis activity"/>
    <property type="evidence" value="ECO:0007669"/>
    <property type="project" value="InterPro"/>
</dbReference>
<dbReference type="GO" id="GO:0055085">
    <property type="term" value="P:transmembrane transport"/>
    <property type="evidence" value="ECO:0007669"/>
    <property type="project" value="InterPro"/>
</dbReference>
<dbReference type="CDD" id="cd03218">
    <property type="entry name" value="ABC_YhbG"/>
    <property type="match status" value="1"/>
</dbReference>
<dbReference type="FunFam" id="3.40.50.300:FF:000151">
    <property type="entry name" value="Lipopolysaccharide ABC transporter ATP-binding protein"/>
    <property type="match status" value="1"/>
</dbReference>
<dbReference type="Gene3D" id="3.40.50.300">
    <property type="entry name" value="P-loop containing nucleotide triphosphate hydrolases"/>
    <property type="match status" value="1"/>
</dbReference>
<dbReference type="InterPro" id="IPR003593">
    <property type="entry name" value="AAA+_ATPase"/>
</dbReference>
<dbReference type="InterPro" id="IPR051120">
    <property type="entry name" value="ABC_AA/LPS_Transport"/>
</dbReference>
<dbReference type="InterPro" id="IPR003439">
    <property type="entry name" value="ABC_transporter-like_ATP-bd"/>
</dbReference>
<dbReference type="InterPro" id="IPR017871">
    <property type="entry name" value="ABC_transporter-like_CS"/>
</dbReference>
<dbReference type="InterPro" id="IPR030921">
    <property type="entry name" value="LPS_export_LptB"/>
</dbReference>
<dbReference type="InterPro" id="IPR027417">
    <property type="entry name" value="P-loop_NTPase"/>
</dbReference>
<dbReference type="NCBIfam" id="TIGR04406">
    <property type="entry name" value="LPS_export_lptB"/>
    <property type="match status" value="1"/>
</dbReference>
<dbReference type="PANTHER" id="PTHR45772">
    <property type="entry name" value="CONSERVED COMPONENT OF ABC TRANSPORTER FOR NATURAL AMINO ACIDS-RELATED"/>
    <property type="match status" value="1"/>
</dbReference>
<dbReference type="PANTHER" id="PTHR45772:SF10">
    <property type="entry name" value="LIPOPOLYSACCHARIDE EXPORT SYSTEM ATP-BINDING PROTEIN LPTB"/>
    <property type="match status" value="1"/>
</dbReference>
<dbReference type="Pfam" id="PF00005">
    <property type="entry name" value="ABC_tran"/>
    <property type="match status" value="1"/>
</dbReference>
<dbReference type="SMART" id="SM00382">
    <property type="entry name" value="AAA"/>
    <property type="match status" value="1"/>
</dbReference>
<dbReference type="SUPFAM" id="SSF52540">
    <property type="entry name" value="P-loop containing nucleoside triphosphate hydrolases"/>
    <property type="match status" value="1"/>
</dbReference>
<dbReference type="PROSITE" id="PS00211">
    <property type="entry name" value="ABC_TRANSPORTER_1"/>
    <property type="match status" value="1"/>
</dbReference>
<dbReference type="PROSITE" id="PS50893">
    <property type="entry name" value="ABC_TRANSPORTER_2"/>
    <property type="match status" value="1"/>
</dbReference>
<reference key="1">
    <citation type="journal article" date="1990" name="J. Bacteriol.">
        <title>Complementation of Escherichia coli sigma 54 (NtrA)-dependent formate hydrogenlyase activity by a cloned Thiobacillus ferrooxidans ntrA gene.</title>
        <authorList>
            <person name="Berger D.K."/>
            <person name="Woods D.R."/>
            <person name="Rawlings D.E."/>
        </authorList>
    </citation>
    <scope>NUCLEOTIDE SEQUENCE [GENOMIC DNA]</scope>
    <source>
        <strain>ATCC 33020 / DSM 29468 / JCM 18981 / 11Fe</strain>
    </source>
</reference>
<organism>
    <name type="scientific">Acidithiobacillus ferridurans</name>
    <dbReference type="NCBI Taxonomy" id="1232575"/>
    <lineage>
        <taxon>Bacteria</taxon>
        <taxon>Pseudomonadati</taxon>
        <taxon>Pseudomonadota</taxon>
        <taxon>Acidithiobacillia</taxon>
        <taxon>Acidithiobacillales</taxon>
        <taxon>Acidithiobacillaceae</taxon>
        <taxon>Acidithiobacillus</taxon>
    </lineage>
</organism>